<accession>Q97B41</accession>
<name>EF1B_THEVO</name>
<feature type="chain" id="PRO_0000155071" description="Elongation factor 1-beta">
    <location>
        <begin position="1"/>
        <end position="88"/>
    </location>
</feature>
<protein>
    <recommendedName>
        <fullName>Elongation factor 1-beta</fullName>
        <shortName>EF-1-beta</shortName>
    </recommendedName>
    <alternativeName>
        <fullName>aEF-1beta</fullName>
    </alternativeName>
</protein>
<gene>
    <name type="primary">ef1b</name>
    <name type="ordered locus">TV0618</name>
    <name type="ORF">TVG0610740</name>
</gene>
<comment type="function">
    <text evidence="1">Promotes the exchange of GDP for GTP in EF-1-alpha/GDP, thus allowing the regeneration of EF-1-alpha/GTP that could then be used to form the ternary complex EF-1-alpha/GTP/AAtRNA.</text>
</comment>
<comment type="similarity">
    <text evidence="2">Belongs to the EF-1-beta/EF-1-delta family.</text>
</comment>
<comment type="sequence caution" evidence="2">
    <conflict type="erroneous initiation">
        <sequence resource="EMBL-CDS" id="BAB59760"/>
    </conflict>
</comment>
<organism>
    <name type="scientific">Thermoplasma volcanium (strain ATCC 51530 / DSM 4299 / JCM 9571 / NBRC 15438 / GSS1)</name>
    <dbReference type="NCBI Taxonomy" id="273116"/>
    <lineage>
        <taxon>Archaea</taxon>
        <taxon>Methanobacteriati</taxon>
        <taxon>Thermoplasmatota</taxon>
        <taxon>Thermoplasmata</taxon>
        <taxon>Thermoplasmatales</taxon>
        <taxon>Thermoplasmataceae</taxon>
        <taxon>Thermoplasma</taxon>
    </lineage>
</organism>
<sequence>MADVLVSFKLLPSDSDVDTSVMESEVKEKLNGVCKINNIEEKDIGFGLKYIHLEVIVEDKEGEVDRIEKVLSMVKGVGEINTENVSLI</sequence>
<reference key="1">
    <citation type="journal article" date="2000" name="Proc. Natl. Acad. Sci. U.S.A.">
        <title>Archaeal adaptation to higher temperatures revealed by genomic sequence of Thermoplasma volcanium.</title>
        <authorList>
            <person name="Kawashima T."/>
            <person name="Amano N."/>
            <person name="Koike H."/>
            <person name="Makino S."/>
            <person name="Higuchi S."/>
            <person name="Kawashima-Ohya Y."/>
            <person name="Watanabe K."/>
            <person name="Yamazaki M."/>
            <person name="Kanehori K."/>
            <person name="Kawamoto T."/>
            <person name="Nunoshiba T."/>
            <person name="Yamamoto Y."/>
            <person name="Aramaki H."/>
            <person name="Makino K."/>
            <person name="Suzuki M."/>
        </authorList>
    </citation>
    <scope>NUCLEOTIDE SEQUENCE [LARGE SCALE GENOMIC DNA]</scope>
    <source>
        <strain>ATCC 51530 / DSM 4299 / JCM 9571 / NBRC 15438 / GSS1</strain>
    </source>
</reference>
<evidence type="ECO:0000250" key="1"/>
<evidence type="ECO:0000305" key="2"/>
<proteinExistence type="inferred from homology"/>
<dbReference type="EMBL" id="BA000011">
    <property type="protein sequence ID" value="BAB59760.1"/>
    <property type="status" value="ALT_INIT"/>
    <property type="molecule type" value="Genomic_DNA"/>
</dbReference>
<dbReference type="RefSeq" id="WP_048053942.1">
    <property type="nucleotide sequence ID" value="NC_002689.2"/>
</dbReference>
<dbReference type="SMR" id="Q97B41"/>
<dbReference type="STRING" id="273116.gene:9381406"/>
<dbReference type="PaxDb" id="273116-14324834"/>
<dbReference type="GeneID" id="1441724"/>
<dbReference type="KEGG" id="tvo:TVG0610740"/>
<dbReference type="eggNOG" id="arCOG01988">
    <property type="taxonomic scope" value="Archaea"/>
</dbReference>
<dbReference type="HOGENOM" id="CLU_165896_2_0_2"/>
<dbReference type="OrthoDB" id="84643at2157"/>
<dbReference type="PhylomeDB" id="Q97B41"/>
<dbReference type="Proteomes" id="UP000001017">
    <property type="component" value="Chromosome"/>
</dbReference>
<dbReference type="GO" id="GO:0003746">
    <property type="term" value="F:translation elongation factor activity"/>
    <property type="evidence" value="ECO:0007669"/>
    <property type="project" value="UniProtKB-UniRule"/>
</dbReference>
<dbReference type="CDD" id="cd00292">
    <property type="entry name" value="EF1B"/>
    <property type="match status" value="1"/>
</dbReference>
<dbReference type="Gene3D" id="3.30.70.60">
    <property type="match status" value="1"/>
</dbReference>
<dbReference type="HAMAP" id="MF_00043">
    <property type="entry name" value="EF1_beta"/>
    <property type="match status" value="1"/>
</dbReference>
<dbReference type="InterPro" id="IPR036219">
    <property type="entry name" value="eEF-1beta-like_sf"/>
</dbReference>
<dbReference type="InterPro" id="IPR014038">
    <property type="entry name" value="EF1B_bsu/dsu_GNE"/>
</dbReference>
<dbReference type="InterPro" id="IPR014717">
    <property type="entry name" value="Transl_elong_EF1B/ribsomal_bS6"/>
</dbReference>
<dbReference type="InterPro" id="IPR004542">
    <property type="entry name" value="Transl_elong_EF1B_B_arc"/>
</dbReference>
<dbReference type="NCBIfam" id="TIGR00489">
    <property type="entry name" value="aEF-1_beta"/>
    <property type="match status" value="1"/>
</dbReference>
<dbReference type="NCBIfam" id="NF001670">
    <property type="entry name" value="PRK00435.1"/>
    <property type="match status" value="1"/>
</dbReference>
<dbReference type="PANTHER" id="PTHR39647">
    <property type="entry name" value="ELONGATION FACTOR 1-BETA"/>
    <property type="match status" value="1"/>
</dbReference>
<dbReference type="PANTHER" id="PTHR39647:SF1">
    <property type="entry name" value="ELONGATION FACTOR 1-BETA"/>
    <property type="match status" value="1"/>
</dbReference>
<dbReference type="Pfam" id="PF00736">
    <property type="entry name" value="EF1_GNE"/>
    <property type="match status" value="1"/>
</dbReference>
<dbReference type="PIRSF" id="PIRSF006521">
    <property type="entry name" value="Transl_elong_EF1B_B_arc"/>
    <property type="match status" value="1"/>
</dbReference>
<dbReference type="SMART" id="SM00888">
    <property type="entry name" value="EF1_GNE"/>
    <property type="match status" value="1"/>
</dbReference>
<dbReference type="SUPFAM" id="SSF54984">
    <property type="entry name" value="eEF-1beta-like"/>
    <property type="match status" value="1"/>
</dbReference>
<keyword id="KW-0251">Elongation factor</keyword>
<keyword id="KW-0648">Protein biosynthesis</keyword>